<proteinExistence type="inferred from homology"/>
<feature type="chain" id="PRO_0000298117" description="Cell division topological specificity factor">
    <location>
        <begin position="1"/>
        <end position="90"/>
    </location>
</feature>
<comment type="function">
    <text evidence="1">Prevents the cell division inhibition by proteins MinC and MinD at internal division sites while permitting inhibition at polar sites. This ensures cell division at the proper site by restricting the formation of a division septum at the midpoint of the long axis of the cell.</text>
</comment>
<comment type="similarity">
    <text evidence="1">Belongs to the MinE family.</text>
</comment>
<organism>
    <name type="scientific">Francisella tularensis subsp. tularensis (strain SCHU S4 / Schu 4)</name>
    <dbReference type="NCBI Taxonomy" id="177416"/>
    <lineage>
        <taxon>Bacteria</taxon>
        <taxon>Pseudomonadati</taxon>
        <taxon>Pseudomonadota</taxon>
        <taxon>Gammaproteobacteria</taxon>
        <taxon>Thiotrichales</taxon>
        <taxon>Francisellaceae</taxon>
        <taxon>Francisella</taxon>
    </lineage>
</organism>
<accession>Q5NEL9</accession>
<reference key="1">
    <citation type="journal article" date="2005" name="Nat. Genet.">
        <title>The complete genome sequence of Francisella tularensis, the causative agent of tularemia.</title>
        <authorList>
            <person name="Larsson P."/>
            <person name="Oyston P.C.F."/>
            <person name="Chain P."/>
            <person name="Chu M.C."/>
            <person name="Duffield M."/>
            <person name="Fuxelius H.-H."/>
            <person name="Garcia E."/>
            <person name="Haelltorp G."/>
            <person name="Johansson D."/>
            <person name="Isherwood K.E."/>
            <person name="Karp P.D."/>
            <person name="Larsson E."/>
            <person name="Liu Y."/>
            <person name="Michell S."/>
            <person name="Prior J."/>
            <person name="Prior R."/>
            <person name="Malfatti S."/>
            <person name="Sjoestedt A."/>
            <person name="Svensson K."/>
            <person name="Thompson N."/>
            <person name="Vergez L."/>
            <person name="Wagg J.K."/>
            <person name="Wren B.W."/>
            <person name="Lindler L.E."/>
            <person name="Andersson S.G.E."/>
            <person name="Forsman M."/>
            <person name="Titball R.W."/>
        </authorList>
    </citation>
    <scope>NUCLEOTIDE SEQUENCE [LARGE SCALE GENOMIC DNA]</scope>
    <source>
        <strain>SCHU S4 / Schu 4</strain>
    </source>
</reference>
<sequence>MLAKLFGLSKKQQSASVAKERLQIIVAHQRSELHPRSSKISSHLLAELKDEIIEVVKKYVALSEENIRDIDLKVEDSSKNSTIEVNIPFN</sequence>
<evidence type="ECO:0000255" key="1">
    <source>
        <dbReference type="HAMAP-Rule" id="MF_00262"/>
    </source>
</evidence>
<gene>
    <name evidence="1" type="primary">minE</name>
    <name type="ordered locus">FTT_1607</name>
</gene>
<name>MINE_FRATT</name>
<keyword id="KW-0131">Cell cycle</keyword>
<keyword id="KW-0132">Cell division</keyword>
<keyword id="KW-1185">Reference proteome</keyword>
<protein>
    <recommendedName>
        <fullName evidence="1">Cell division topological specificity factor</fullName>
    </recommendedName>
</protein>
<dbReference type="EMBL" id="AJ749949">
    <property type="protein sequence ID" value="CAG46240.1"/>
    <property type="molecule type" value="Genomic_DNA"/>
</dbReference>
<dbReference type="RefSeq" id="WP_003014812.1">
    <property type="nucleotide sequence ID" value="NZ_CP010290.1"/>
</dbReference>
<dbReference type="RefSeq" id="YP_170523.1">
    <property type="nucleotide sequence ID" value="NC_006570.2"/>
</dbReference>
<dbReference type="STRING" id="177416.FTT_1607"/>
<dbReference type="DNASU" id="3191992"/>
<dbReference type="EnsemblBacteria" id="CAG46240">
    <property type="protein sequence ID" value="CAG46240"/>
    <property type="gene ID" value="FTT_1607"/>
</dbReference>
<dbReference type="GeneID" id="75264169"/>
<dbReference type="KEGG" id="ftu:FTT_1607"/>
<dbReference type="eggNOG" id="COG0851">
    <property type="taxonomic scope" value="Bacteria"/>
</dbReference>
<dbReference type="OrthoDB" id="9802655at2"/>
<dbReference type="Proteomes" id="UP000001174">
    <property type="component" value="Chromosome"/>
</dbReference>
<dbReference type="GO" id="GO:0051301">
    <property type="term" value="P:cell division"/>
    <property type="evidence" value="ECO:0007669"/>
    <property type="project" value="UniProtKB-KW"/>
</dbReference>
<dbReference type="GO" id="GO:0032955">
    <property type="term" value="P:regulation of division septum assembly"/>
    <property type="evidence" value="ECO:0007669"/>
    <property type="project" value="InterPro"/>
</dbReference>
<dbReference type="Gene3D" id="3.30.1070.10">
    <property type="entry name" value="Cell division topological specificity factor MinE"/>
    <property type="match status" value="1"/>
</dbReference>
<dbReference type="HAMAP" id="MF_00262">
    <property type="entry name" value="MinE"/>
    <property type="match status" value="1"/>
</dbReference>
<dbReference type="InterPro" id="IPR005527">
    <property type="entry name" value="MinE"/>
</dbReference>
<dbReference type="InterPro" id="IPR036707">
    <property type="entry name" value="MinE_sf"/>
</dbReference>
<dbReference type="NCBIfam" id="TIGR01215">
    <property type="entry name" value="minE"/>
    <property type="match status" value="1"/>
</dbReference>
<dbReference type="NCBIfam" id="NF001422">
    <property type="entry name" value="PRK00296.1"/>
    <property type="match status" value="1"/>
</dbReference>
<dbReference type="Pfam" id="PF03776">
    <property type="entry name" value="MinE"/>
    <property type="match status" value="1"/>
</dbReference>
<dbReference type="SUPFAM" id="SSF55229">
    <property type="entry name" value="Cell division protein MinE topological specificity domain"/>
    <property type="match status" value="1"/>
</dbReference>